<accession>B2FP40</accession>
<sequence>MRGRDEETGEFHDKSRSQNRRDALDVLALGEKLVSLTPAQLARLPIPEDLLPHIAECKRITAHIAHKRQLAFLAKHMRREEEATLDAIRDALDANSETGRREVAMMHRVEDWRERLLAEGDKALAALLDDYPQADRQQLRTLVRNAQAEKAKNKPPRAYREIFQVLRALMLPAALGLKASAEDADPVESDEADED</sequence>
<reference key="1">
    <citation type="journal article" date="2008" name="Genome Biol.">
        <title>The complete genome, comparative and functional analysis of Stenotrophomonas maltophilia reveals an organism heavily shielded by drug resistance determinants.</title>
        <authorList>
            <person name="Crossman L.C."/>
            <person name="Gould V.C."/>
            <person name="Dow J.M."/>
            <person name="Vernikos G.S."/>
            <person name="Okazaki A."/>
            <person name="Sebaihia M."/>
            <person name="Saunders D."/>
            <person name="Arrowsmith C."/>
            <person name="Carver T."/>
            <person name="Peters N."/>
            <person name="Adlem E."/>
            <person name="Kerhornou A."/>
            <person name="Lord A."/>
            <person name="Murphy L."/>
            <person name="Seeger K."/>
            <person name="Squares R."/>
            <person name="Rutter S."/>
            <person name="Quail M.A."/>
            <person name="Rajandream M.A."/>
            <person name="Harris D."/>
            <person name="Churcher C."/>
            <person name="Bentley S.D."/>
            <person name="Parkhill J."/>
            <person name="Thomson N.R."/>
            <person name="Avison M.B."/>
        </authorList>
    </citation>
    <scope>NUCLEOTIDE SEQUENCE [LARGE SCALE GENOMIC DNA]</scope>
    <source>
        <strain>K279a</strain>
    </source>
</reference>
<keyword id="KW-0963">Cytoplasm</keyword>
<keyword id="KW-1185">Reference proteome</keyword>
<keyword id="KW-0690">Ribosome biogenesis</keyword>
<keyword id="KW-0694">RNA-binding</keyword>
<keyword id="KW-0699">rRNA-binding</keyword>
<organism>
    <name type="scientific">Stenotrophomonas maltophilia (strain K279a)</name>
    <dbReference type="NCBI Taxonomy" id="522373"/>
    <lineage>
        <taxon>Bacteria</taxon>
        <taxon>Pseudomonadati</taxon>
        <taxon>Pseudomonadota</taxon>
        <taxon>Gammaproteobacteria</taxon>
        <taxon>Lysobacterales</taxon>
        <taxon>Lysobacteraceae</taxon>
        <taxon>Stenotrophomonas</taxon>
        <taxon>Stenotrophomonas maltophilia group</taxon>
    </lineage>
</organism>
<feature type="chain" id="PRO_1000198401" description="Dual-action ribosomal maturation protein DarP">
    <location>
        <begin position="1"/>
        <end position="195"/>
    </location>
</feature>
<proteinExistence type="inferred from homology"/>
<evidence type="ECO:0000255" key="1">
    <source>
        <dbReference type="HAMAP-Rule" id="MF_00765"/>
    </source>
</evidence>
<gene>
    <name evidence="1" type="primary">darP</name>
    <name type="ordered locus">Smlt3470</name>
</gene>
<comment type="function">
    <text evidence="1">Member of a network of 50S ribosomal subunit biogenesis factors which assembles along the 30S-50S interface, preventing incorrect 23S rRNA structures from forming. Promotes peptidyl transferase center (PTC) maturation.</text>
</comment>
<comment type="subcellular location">
    <subcellularLocation>
        <location evidence="1">Cytoplasm</location>
    </subcellularLocation>
    <text evidence="1">Associates with late stage pre-50S ribosomal subunits.</text>
</comment>
<comment type="similarity">
    <text evidence="1">Belongs to the DarP family.</text>
</comment>
<protein>
    <recommendedName>
        <fullName evidence="1">Dual-action ribosomal maturation protein DarP</fullName>
    </recommendedName>
    <alternativeName>
        <fullName evidence="1">Large ribosomal subunit assembly factor DarP</fullName>
    </alternativeName>
</protein>
<dbReference type="EMBL" id="AM743169">
    <property type="protein sequence ID" value="CAQ46894.1"/>
    <property type="molecule type" value="Genomic_DNA"/>
</dbReference>
<dbReference type="SMR" id="B2FP40"/>
<dbReference type="EnsemblBacteria" id="CAQ46894">
    <property type="protein sequence ID" value="CAQ46894"/>
    <property type="gene ID" value="Smlt3470"/>
</dbReference>
<dbReference type="KEGG" id="sml:Smlt3470"/>
<dbReference type="PATRIC" id="fig|522373.3.peg.3255"/>
<dbReference type="eggNOG" id="COG3028">
    <property type="taxonomic scope" value="Bacteria"/>
</dbReference>
<dbReference type="HOGENOM" id="CLU_106757_0_0_6"/>
<dbReference type="Proteomes" id="UP000008840">
    <property type="component" value="Chromosome"/>
</dbReference>
<dbReference type="GO" id="GO:0005829">
    <property type="term" value="C:cytosol"/>
    <property type="evidence" value="ECO:0007669"/>
    <property type="project" value="TreeGrafter"/>
</dbReference>
<dbReference type="GO" id="GO:0043022">
    <property type="term" value="F:ribosome binding"/>
    <property type="evidence" value="ECO:0007669"/>
    <property type="project" value="UniProtKB-UniRule"/>
</dbReference>
<dbReference type="GO" id="GO:0019843">
    <property type="term" value="F:rRNA binding"/>
    <property type="evidence" value="ECO:0007669"/>
    <property type="project" value="UniProtKB-UniRule"/>
</dbReference>
<dbReference type="GO" id="GO:1902626">
    <property type="term" value="P:assembly of large subunit precursor of preribosome"/>
    <property type="evidence" value="ECO:0007669"/>
    <property type="project" value="UniProtKB-UniRule"/>
</dbReference>
<dbReference type="CDD" id="cd16331">
    <property type="entry name" value="YjgA-like"/>
    <property type="match status" value="1"/>
</dbReference>
<dbReference type="FunFam" id="1.10.60.30:FF:000002">
    <property type="entry name" value="UPF0307 protein YjgA"/>
    <property type="match status" value="1"/>
</dbReference>
<dbReference type="Gene3D" id="1.10.60.30">
    <property type="entry name" value="PSPTO4464-like domains"/>
    <property type="match status" value="2"/>
</dbReference>
<dbReference type="HAMAP" id="MF_00765">
    <property type="entry name" value="DarP"/>
    <property type="match status" value="1"/>
</dbReference>
<dbReference type="InterPro" id="IPR006839">
    <property type="entry name" value="DarP"/>
</dbReference>
<dbReference type="InterPro" id="IPR023153">
    <property type="entry name" value="DarP_sf"/>
</dbReference>
<dbReference type="NCBIfam" id="NF003593">
    <property type="entry name" value="PRK05255.1-1"/>
    <property type="match status" value="1"/>
</dbReference>
<dbReference type="PANTHER" id="PTHR38101">
    <property type="entry name" value="UPF0307 PROTEIN YJGA"/>
    <property type="match status" value="1"/>
</dbReference>
<dbReference type="PANTHER" id="PTHR38101:SF1">
    <property type="entry name" value="UPF0307 PROTEIN YJGA"/>
    <property type="match status" value="1"/>
</dbReference>
<dbReference type="Pfam" id="PF04751">
    <property type="entry name" value="DarP"/>
    <property type="match status" value="1"/>
</dbReference>
<dbReference type="PIRSF" id="PIRSF016183">
    <property type="entry name" value="UCP016183"/>
    <property type="match status" value="1"/>
</dbReference>
<dbReference type="SUPFAM" id="SSF158710">
    <property type="entry name" value="PSPTO4464-like"/>
    <property type="match status" value="1"/>
</dbReference>
<name>DARP_STRMK</name>